<dbReference type="EMBL" id="BC107506">
    <property type="protein sequence ID" value="AAI07507.1"/>
    <property type="molecule type" value="mRNA"/>
</dbReference>
<dbReference type="SMR" id="Q3B7Q7"/>
<dbReference type="FunCoup" id="Q3B7Q7">
    <property type="interactions" value="407"/>
</dbReference>
<dbReference type="STRING" id="7955.ENSDARP00000112190"/>
<dbReference type="PaxDb" id="7955-ENSDARP00000112190"/>
<dbReference type="AGR" id="ZFIN:ZDB-GENE-051023-10"/>
<dbReference type="ZFIN" id="ZDB-GENE-051023-10">
    <property type="gene designation" value="nubp2"/>
</dbReference>
<dbReference type="eggNOG" id="KOG3022">
    <property type="taxonomic scope" value="Eukaryota"/>
</dbReference>
<dbReference type="InParanoid" id="Q3B7Q7"/>
<dbReference type="PhylomeDB" id="Q3B7Q7"/>
<dbReference type="PRO" id="PR:Q3B7Q7"/>
<dbReference type="Proteomes" id="UP000000437">
    <property type="component" value="Unplaced"/>
</dbReference>
<dbReference type="GO" id="GO:0005829">
    <property type="term" value="C:cytosol"/>
    <property type="evidence" value="ECO:0000318"/>
    <property type="project" value="GO_Central"/>
</dbReference>
<dbReference type="GO" id="GO:0051539">
    <property type="term" value="F:4 iron, 4 sulfur cluster binding"/>
    <property type="evidence" value="ECO:0007669"/>
    <property type="project" value="UniProtKB-UniRule"/>
</dbReference>
<dbReference type="GO" id="GO:0005524">
    <property type="term" value="F:ATP binding"/>
    <property type="evidence" value="ECO:0007669"/>
    <property type="project" value="UniProtKB-KW"/>
</dbReference>
<dbReference type="GO" id="GO:0140663">
    <property type="term" value="F:ATP-dependent FeS chaperone activity"/>
    <property type="evidence" value="ECO:0007669"/>
    <property type="project" value="InterPro"/>
</dbReference>
<dbReference type="GO" id="GO:0051536">
    <property type="term" value="F:iron-sulfur cluster binding"/>
    <property type="evidence" value="ECO:0000318"/>
    <property type="project" value="GO_Central"/>
</dbReference>
<dbReference type="GO" id="GO:0046872">
    <property type="term" value="F:metal ion binding"/>
    <property type="evidence" value="ECO:0007669"/>
    <property type="project" value="UniProtKB-KW"/>
</dbReference>
<dbReference type="GO" id="GO:0016226">
    <property type="term" value="P:iron-sulfur cluster assembly"/>
    <property type="evidence" value="ECO:0000318"/>
    <property type="project" value="GO_Central"/>
</dbReference>
<dbReference type="CDD" id="cd02037">
    <property type="entry name" value="Mrp_NBP35"/>
    <property type="match status" value="1"/>
</dbReference>
<dbReference type="FunFam" id="3.40.50.300:FF:000796">
    <property type="entry name" value="Cytosolic Fe-S cluster assembly factor NUBP2"/>
    <property type="match status" value="1"/>
</dbReference>
<dbReference type="Gene3D" id="3.40.50.300">
    <property type="entry name" value="P-loop containing nucleotide triphosphate hydrolases"/>
    <property type="match status" value="1"/>
</dbReference>
<dbReference type="HAMAP" id="MF_02040">
    <property type="entry name" value="Mrp_NBP35"/>
    <property type="match status" value="1"/>
</dbReference>
<dbReference type="HAMAP" id="MF_03039">
    <property type="entry name" value="NUBP2"/>
    <property type="match status" value="1"/>
</dbReference>
<dbReference type="InterPro" id="IPR019591">
    <property type="entry name" value="Mrp/NBP35_ATP-bd"/>
</dbReference>
<dbReference type="InterPro" id="IPR028600">
    <property type="entry name" value="NUBP2/Cfd1_eukaryotes"/>
</dbReference>
<dbReference type="InterPro" id="IPR027417">
    <property type="entry name" value="P-loop_NTPase"/>
</dbReference>
<dbReference type="InterPro" id="IPR033756">
    <property type="entry name" value="YlxH/NBP35"/>
</dbReference>
<dbReference type="PANTHER" id="PTHR23264:SF19">
    <property type="entry name" value="CYTOSOLIC FE-S CLUSTER ASSEMBLY FACTOR NUBP2"/>
    <property type="match status" value="1"/>
</dbReference>
<dbReference type="PANTHER" id="PTHR23264">
    <property type="entry name" value="NUCLEOTIDE-BINDING PROTEIN NBP35 YEAST -RELATED"/>
    <property type="match status" value="1"/>
</dbReference>
<dbReference type="Pfam" id="PF10609">
    <property type="entry name" value="ParA"/>
    <property type="match status" value="1"/>
</dbReference>
<dbReference type="SUPFAM" id="SSF52540">
    <property type="entry name" value="P-loop containing nucleoside triphosphate hydrolases"/>
    <property type="match status" value="1"/>
</dbReference>
<accession>Q3B7Q7</accession>
<evidence type="ECO:0000255" key="1">
    <source>
        <dbReference type="HAMAP-Rule" id="MF_03039"/>
    </source>
</evidence>
<proteinExistence type="evidence at transcript level"/>
<organism>
    <name type="scientific">Danio rerio</name>
    <name type="common">Zebrafish</name>
    <name type="synonym">Brachydanio rerio</name>
    <dbReference type="NCBI Taxonomy" id="7955"/>
    <lineage>
        <taxon>Eukaryota</taxon>
        <taxon>Metazoa</taxon>
        <taxon>Chordata</taxon>
        <taxon>Craniata</taxon>
        <taxon>Vertebrata</taxon>
        <taxon>Euteleostomi</taxon>
        <taxon>Actinopterygii</taxon>
        <taxon>Neopterygii</taxon>
        <taxon>Teleostei</taxon>
        <taxon>Ostariophysi</taxon>
        <taxon>Cypriniformes</taxon>
        <taxon>Danionidae</taxon>
        <taxon>Danioninae</taxon>
        <taxon>Danio</taxon>
    </lineage>
</organism>
<keyword id="KW-0004">4Fe-4S</keyword>
<keyword id="KW-0067">ATP-binding</keyword>
<keyword id="KW-0963">Cytoplasm</keyword>
<keyword id="KW-0408">Iron</keyword>
<keyword id="KW-0411">Iron-sulfur</keyword>
<keyword id="KW-0479">Metal-binding</keyword>
<keyword id="KW-0547">Nucleotide-binding</keyword>
<keyword id="KW-1185">Reference proteome</keyword>
<reference key="1">
    <citation type="submission" date="2005-10" db="EMBL/GenBank/DDBJ databases">
        <authorList>
            <consortium name="NIH - Zebrafish Gene Collection (ZGC) project"/>
        </authorList>
    </citation>
    <scope>NUCLEOTIDE SEQUENCE [LARGE SCALE MRNA]</scope>
    <source>
        <tissue>Olfactory epithelium</tissue>
    </source>
</reference>
<feature type="chain" id="PRO_0000382702" description="Cytosolic Fe-S cluster assembly factor nubp2">
    <location>
        <begin position="1"/>
        <end position="268"/>
    </location>
</feature>
<feature type="binding site" evidence="1">
    <location>
        <begin position="21"/>
        <end position="28"/>
    </location>
    <ligand>
        <name>ATP</name>
        <dbReference type="ChEBI" id="CHEBI:30616"/>
    </ligand>
</feature>
<feature type="binding site" evidence="1">
    <location>
        <position position="196"/>
    </location>
    <ligand>
        <name>[4Fe-4S] cluster</name>
        <dbReference type="ChEBI" id="CHEBI:49883"/>
        <note>ligand shared between dimeric partners</note>
    </ligand>
</feature>
<feature type="binding site" evidence="1">
    <location>
        <position position="199"/>
    </location>
    <ligand>
        <name>[4Fe-4S] cluster</name>
        <dbReference type="ChEBI" id="CHEBI:49883"/>
        <note>ligand shared between dimeric partners</note>
    </ligand>
</feature>
<gene>
    <name type="primary">nubp2</name>
    <name type="ORF">zgc:123336</name>
</gene>
<sequence length="268" mass="28618">MDGSGKGNLDQVKHVLLVLSGKGGVGKSTITTELALAFRHAGKKVGILDVDLCGPSIPRMLSVGKPEVHQCDSGWVPVYADPQQQQLALMSIAFLLEDSDEAVIWRGPKKTALIGQFVSDVAWGELDILLVDTPPGTSDEHLAVLENLRKHRVDGAVLVTTPQAVSTGDVRREITFCKKTNLKILGIVENMSGFVCPHCSECSNIFSKGGGEELAKLTGSAFLGSVPLDPLLTESLEEGRDFLQAFPESSTFTAISHIANTLLNSLNA</sequence>
<comment type="function">
    <text evidence="1">Component of the cytosolic iron-sulfur (Fe/S) protein assembly (CIA) machinery. Required for maturation of extramitochondrial Fe-S proteins. The nubp1-nubp2 heterotetramer forms a Fe-S scaffold complex, mediating the de novo assembly of an Fe-S cluster and its transfer to target apoproteins.</text>
</comment>
<comment type="cofactor">
    <cofactor evidence="1">
        <name>[4Fe-4S] cluster</name>
        <dbReference type="ChEBI" id="CHEBI:49883"/>
    </cofactor>
    <text evidence="1">Binds 4 [4Fe-4S] clusters per heterotetramer. Contains two stable clusters in the N-termini of nubp1 and two labile, bridging clusters between subunits of the nubp1-nubp2 heterotetramer.</text>
</comment>
<comment type="subunit">
    <text evidence="1">Heterotetramer of 2 nubp1 and 2 nubp2 chains.</text>
</comment>
<comment type="subcellular location">
    <subcellularLocation>
        <location evidence="1">Cytoplasm</location>
    </subcellularLocation>
</comment>
<comment type="similarity">
    <text evidence="1">Belongs to the Mrp/NBP35 ATP-binding proteins family. NUBP2/CFD1 subfamily.</text>
</comment>
<protein>
    <recommendedName>
        <fullName evidence="1">Cytosolic Fe-S cluster assembly factor nubp2</fullName>
    </recommendedName>
    <alternativeName>
        <fullName evidence="1">Nucleotide-binding protein 2</fullName>
        <shortName evidence="1">NBP 2</shortName>
    </alternativeName>
</protein>
<name>NUBP2_DANRE</name>